<dbReference type="EMBL" id="CP000922">
    <property type="protein sequence ID" value="ACJ32513.1"/>
    <property type="molecule type" value="Genomic_DNA"/>
</dbReference>
<dbReference type="RefSeq" id="WP_000868344.1">
    <property type="nucleotide sequence ID" value="NC_011567.1"/>
</dbReference>
<dbReference type="SMR" id="B7GJ91"/>
<dbReference type="STRING" id="491915.Aflv_0129"/>
<dbReference type="GeneID" id="97822099"/>
<dbReference type="KEGG" id="afl:Aflv_0129"/>
<dbReference type="eggNOG" id="COG0257">
    <property type="taxonomic scope" value="Bacteria"/>
</dbReference>
<dbReference type="HOGENOM" id="CLU_135723_6_2_9"/>
<dbReference type="Proteomes" id="UP000000742">
    <property type="component" value="Chromosome"/>
</dbReference>
<dbReference type="GO" id="GO:0005737">
    <property type="term" value="C:cytoplasm"/>
    <property type="evidence" value="ECO:0007669"/>
    <property type="project" value="UniProtKB-ARBA"/>
</dbReference>
<dbReference type="GO" id="GO:1990904">
    <property type="term" value="C:ribonucleoprotein complex"/>
    <property type="evidence" value="ECO:0007669"/>
    <property type="project" value="UniProtKB-KW"/>
</dbReference>
<dbReference type="GO" id="GO:0005840">
    <property type="term" value="C:ribosome"/>
    <property type="evidence" value="ECO:0007669"/>
    <property type="project" value="UniProtKB-KW"/>
</dbReference>
<dbReference type="GO" id="GO:0003735">
    <property type="term" value="F:structural constituent of ribosome"/>
    <property type="evidence" value="ECO:0007669"/>
    <property type="project" value="InterPro"/>
</dbReference>
<dbReference type="GO" id="GO:0006412">
    <property type="term" value="P:translation"/>
    <property type="evidence" value="ECO:0007669"/>
    <property type="project" value="UniProtKB-UniRule"/>
</dbReference>
<dbReference type="HAMAP" id="MF_00251">
    <property type="entry name" value="Ribosomal_bL36"/>
    <property type="match status" value="1"/>
</dbReference>
<dbReference type="InterPro" id="IPR000473">
    <property type="entry name" value="Ribosomal_bL36"/>
</dbReference>
<dbReference type="InterPro" id="IPR035977">
    <property type="entry name" value="Ribosomal_bL36_sp"/>
</dbReference>
<dbReference type="NCBIfam" id="TIGR01022">
    <property type="entry name" value="rpmJ_bact"/>
    <property type="match status" value="1"/>
</dbReference>
<dbReference type="PANTHER" id="PTHR42888">
    <property type="entry name" value="50S RIBOSOMAL PROTEIN L36, CHLOROPLASTIC"/>
    <property type="match status" value="1"/>
</dbReference>
<dbReference type="PANTHER" id="PTHR42888:SF1">
    <property type="entry name" value="LARGE RIBOSOMAL SUBUNIT PROTEIN BL36C"/>
    <property type="match status" value="1"/>
</dbReference>
<dbReference type="Pfam" id="PF00444">
    <property type="entry name" value="Ribosomal_L36"/>
    <property type="match status" value="1"/>
</dbReference>
<dbReference type="SUPFAM" id="SSF57840">
    <property type="entry name" value="Ribosomal protein L36"/>
    <property type="match status" value="1"/>
</dbReference>
<dbReference type="PROSITE" id="PS00828">
    <property type="entry name" value="RIBOSOMAL_L36"/>
    <property type="match status" value="1"/>
</dbReference>
<sequence length="37" mass="4333">MKVRPSVKPICEKCKVIRRRGKVMVICENPKHKQKQG</sequence>
<accession>B7GJ91</accession>
<reference key="1">
    <citation type="journal article" date="2008" name="Genome Biol.">
        <title>Encapsulated in silica: genome, proteome and physiology of the thermophilic bacterium Anoxybacillus flavithermus WK1.</title>
        <authorList>
            <person name="Saw J.H."/>
            <person name="Mountain B.W."/>
            <person name="Feng L."/>
            <person name="Omelchenko M.V."/>
            <person name="Hou S."/>
            <person name="Saito J.A."/>
            <person name="Stott M.B."/>
            <person name="Li D."/>
            <person name="Zhao G."/>
            <person name="Wu J."/>
            <person name="Galperin M.Y."/>
            <person name="Koonin E.V."/>
            <person name="Makarova K.S."/>
            <person name="Wolf Y.I."/>
            <person name="Rigden D.J."/>
            <person name="Dunfield P.F."/>
            <person name="Wang L."/>
            <person name="Alam M."/>
        </authorList>
    </citation>
    <scope>NUCLEOTIDE SEQUENCE [LARGE SCALE GENOMIC DNA]</scope>
    <source>
        <strain>DSM 21510 / WK1</strain>
    </source>
</reference>
<proteinExistence type="inferred from homology"/>
<name>RL36_ANOFW</name>
<feature type="chain" id="PRO_1000196159" description="Large ribosomal subunit protein bL36">
    <location>
        <begin position="1"/>
        <end position="37"/>
    </location>
</feature>
<keyword id="KW-0687">Ribonucleoprotein</keyword>
<keyword id="KW-0689">Ribosomal protein</keyword>
<protein>
    <recommendedName>
        <fullName evidence="1">Large ribosomal subunit protein bL36</fullName>
    </recommendedName>
    <alternativeName>
        <fullName evidence="2">50S ribosomal protein L36</fullName>
    </alternativeName>
</protein>
<evidence type="ECO:0000255" key="1">
    <source>
        <dbReference type="HAMAP-Rule" id="MF_00251"/>
    </source>
</evidence>
<evidence type="ECO:0000305" key="2"/>
<gene>
    <name evidence="1" type="primary">rpmJ</name>
    <name type="ordered locus">Aflv_0129</name>
</gene>
<comment type="similarity">
    <text evidence="1">Belongs to the bacterial ribosomal protein bL36 family.</text>
</comment>
<organism>
    <name type="scientific">Anoxybacillus flavithermus (strain DSM 21510 / WK1)</name>
    <dbReference type="NCBI Taxonomy" id="491915"/>
    <lineage>
        <taxon>Bacteria</taxon>
        <taxon>Bacillati</taxon>
        <taxon>Bacillota</taxon>
        <taxon>Bacilli</taxon>
        <taxon>Bacillales</taxon>
        <taxon>Anoxybacillaceae</taxon>
        <taxon>Anoxybacillus</taxon>
    </lineage>
</organism>